<feature type="chain" id="PRO_0000209058" description="Low affinity potassium transport system protein Kup">
    <location>
        <begin position="1"/>
        <end position="622"/>
    </location>
</feature>
<feature type="transmembrane region" description="Helical" evidence="1">
    <location>
        <begin position="9"/>
        <end position="29"/>
    </location>
</feature>
<feature type="transmembrane region" description="Helical" evidence="1">
    <location>
        <begin position="49"/>
        <end position="69"/>
    </location>
</feature>
<feature type="transmembrane region" description="Helical" evidence="1">
    <location>
        <begin position="103"/>
        <end position="123"/>
    </location>
</feature>
<feature type="transmembrane region" description="Helical" evidence="1">
    <location>
        <begin position="137"/>
        <end position="157"/>
    </location>
</feature>
<feature type="transmembrane region" description="Helical" evidence="1">
    <location>
        <begin position="165"/>
        <end position="185"/>
    </location>
</feature>
<feature type="transmembrane region" description="Helical" evidence="1">
    <location>
        <begin position="213"/>
        <end position="233"/>
    </location>
</feature>
<feature type="transmembrane region" description="Helical" evidence="1">
    <location>
        <begin position="247"/>
        <end position="267"/>
    </location>
</feature>
<feature type="transmembrane region" description="Helical" evidence="1">
    <location>
        <begin position="276"/>
        <end position="296"/>
    </location>
</feature>
<feature type="transmembrane region" description="Helical" evidence="1">
    <location>
        <begin position="337"/>
        <end position="357"/>
    </location>
</feature>
<feature type="transmembrane region" description="Helical" evidence="1">
    <location>
        <begin position="363"/>
        <end position="383"/>
    </location>
</feature>
<feature type="transmembrane region" description="Helical" evidence="1">
    <location>
        <begin position="396"/>
        <end position="416"/>
    </location>
</feature>
<feature type="transmembrane region" description="Helical" evidence="1">
    <location>
        <begin position="419"/>
        <end position="439"/>
    </location>
</feature>
<sequence length="622" mass="69270">MSTDNKQSLPAITLAAIGVVYGDIGTSPLYTLRECLSGQFGFGVERDAVFGFLSLIFWLLIFVVSIKYLTFVMRADNAGEGGILTLMSLAGRNTSARTTSMLVIMGLIGGSFFYGEVVITPAISVMSAIEGLEIVAPQLDTWIVPLSIIVLTLLFMIQKHGTAMVGKLFAPIMLTWFLILAGLGLRSIIANPEVLHALNPMWAVHFFLEYKTVSFIALGAVVLSITGGEVLYADMGHFGKFSIRLAWFTVVLPSLTLNYFGQGALLLKNPEAIKNPFFLLAPDWALIPLLIIAALATVIASQAVISGVFSLTRQAVRLGYLSPMRIIHTSEMESGQIYIPFVNWMLYVAVVIVIVSFEHSSNLAAAYGIAVTGTMVLTSILSTTVARQNWHWNKYFVALILIAFLCVDIPLFTANLDKLLSGGWLPLSLGTVMFIVMTTWKSERFRLLRRMHEHGNSLEAMIASLEKSPPVRVPGTAVYMSRAINVIPFALMHNLKHNKVLHERVILLTLRTEDAPYVHNVRRVQIEQLSPTFWRVVASYGWRETPNVEEVFHRCGLEGLSCRMMETSFFMSHESLILGKRPWYLRLRGKLYLLLQRNALRAPDQFEIPPNRVIELGTQVEI</sequence>
<dbReference type="EMBL" id="AE005674">
    <property type="protein sequence ID" value="AAN45268.1"/>
    <property type="molecule type" value="Genomic_DNA"/>
</dbReference>
<dbReference type="EMBL" id="AE014073">
    <property type="protein sequence ID" value="AAP18929.1"/>
    <property type="molecule type" value="Genomic_DNA"/>
</dbReference>
<dbReference type="RefSeq" id="WP_000102309.1">
    <property type="nucleotide sequence ID" value="NZ_WPGW01000238.1"/>
</dbReference>
<dbReference type="STRING" id="198214.SF3828"/>
<dbReference type="PaxDb" id="198214-SF3828"/>
<dbReference type="KEGG" id="sfl:SF3828"/>
<dbReference type="KEGG" id="sfx:S3940"/>
<dbReference type="PATRIC" id="fig|198214.7.peg.4516"/>
<dbReference type="HOGENOM" id="CLU_008142_4_2_6"/>
<dbReference type="Proteomes" id="UP000001006">
    <property type="component" value="Chromosome"/>
</dbReference>
<dbReference type="Proteomes" id="UP000002673">
    <property type="component" value="Chromosome"/>
</dbReference>
<dbReference type="GO" id="GO:0005886">
    <property type="term" value="C:plasma membrane"/>
    <property type="evidence" value="ECO:0007669"/>
    <property type="project" value="UniProtKB-SubCell"/>
</dbReference>
<dbReference type="GO" id="GO:0015079">
    <property type="term" value="F:potassium ion transmembrane transporter activity"/>
    <property type="evidence" value="ECO:0007669"/>
    <property type="project" value="UniProtKB-UniRule"/>
</dbReference>
<dbReference type="GO" id="GO:0015293">
    <property type="term" value="F:symporter activity"/>
    <property type="evidence" value="ECO:0007669"/>
    <property type="project" value="UniProtKB-UniRule"/>
</dbReference>
<dbReference type="HAMAP" id="MF_01522">
    <property type="entry name" value="Kup"/>
    <property type="match status" value="1"/>
</dbReference>
<dbReference type="InterPro" id="IPR003855">
    <property type="entry name" value="K+_transporter"/>
</dbReference>
<dbReference type="InterPro" id="IPR053952">
    <property type="entry name" value="K_trans_C"/>
</dbReference>
<dbReference type="InterPro" id="IPR053951">
    <property type="entry name" value="K_trans_N"/>
</dbReference>
<dbReference type="InterPro" id="IPR023051">
    <property type="entry name" value="Kup"/>
</dbReference>
<dbReference type="NCBIfam" id="TIGR00794">
    <property type="entry name" value="kup"/>
    <property type="match status" value="1"/>
</dbReference>
<dbReference type="NCBIfam" id="NF008015">
    <property type="entry name" value="PRK10745.1"/>
    <property type="match status" value="1"/>
</dbReference>
<dbReference type="PANTHER" id="PTHR30540:SF79">
    <property type="entry name" value="LOW AFFINITY POTASSIUM TRANSPORT SYSTEM PROTEIN KUP"/>
    <property type="match status" value="1"/>
</dbReference>
<dbReference type="PANTHER" id="PTHR30540">
    <property type="entry name" value="OSMOTIC STRESS POTASSIUM TRANSPORTER"/>
    <property type="match status" value="1"/>
</dbReference>
<dbReference type="Pfam" id="PF02705">
    <property type="entry name" value="K_trans"/>
    <property type="match status" value="1"/>
</dbReference>
<dbReference type="Pfam" id="PF22776">
    <property type="entry name" value="K_trans_C"/>
    <property type="match status" value="1"/>
</dbReference>
<organism>
    <name type="scientific">Shigella flexneri</name>
    <dbReference type="NCBI Taxonomy" id="623"/>
    <lineage>
        <taxon>Bacteria</taxon>
        <taxon>Pseudomonadati</taxon>
        <taxon>Pseudomonadota</taxon>
        <taxon>Gammaproteobacteria</taxon>
        <taxon>Enterobacterales</taxon>
        <taxon>Enterobacteriaceae</taxon>
        <taxon>Shigella</taxon>
    </lineage>
</organism>
<reference key="1">
    <citation type="journal article" date="2002" name="Nucleic Acids Res.">
        <title>Genome sequence of Shigella flexneri 2a: insights into pathogenicity through comparison with genomes of Escherichia coli K12 and O157.</title>
        <authorList>
            <person name="Jin Q."/>
            <person name="Yuan Z."/>
            <person name="Xu J."/>
            <person name="Wang Y."/>
            <person name="Shen Y."/>
            <person name="Lu W."/>
            <person name="Wang J."/>
            <person name="Liu H."/>
            <person name="Yang J."/>
            <person name="Yang F."/>
            <person name="Zhang X."/>
            <person name="Zhang J."/>
            <person name="Yang G."/>
            <person name="Wu H."/>
            <person name="Qu D."/>
            <person name="Dong J."/>
            <person name="Sun L."/>
            <person name="Xue Y."/>
            <person name="Zhao A."/>
            <person name="Gao Y."/>
            <person name="Zhu J."/>
            <person name="Kan B."/>
            <person name="Ding K."/>
            <person name="Chen S."/>
            <person name="Cheng H."/>
            <person name="Yao Z."/>
            <person name="He B."/>
            <person name="Chen R."/>
            <person name="Ma D."/>
            <person name="Qiang B."/>
            <person name="Wen Y."/>
            <person name="Hou Y."/>
            <person name="Yu J."/>
        </authorList>
    </citation>
    <scope>NUCLEOTIDE SEQUENCE [LARGE SCALE GENOMIC DNA]</scope>
    <source>
        <strain>301 / Serotype 2a</strain>
    </source>
</reference>
<reference key="2">
    <citation type="journal article" date="2003" name="Infect. Immun.">
        <title>Complete genome sequence and comparative genomics of Shigella flexneri serotype 2a strain 2457T.</title>
        <authorList>
            <person name="Wei J."/>
            <person name="Goldberg M.B."/>
            <person name="Burland V."/>
            <person name="Venkatesan M.M."/>
            <person name="Deng W."/>
            <person name="Fournier G."/>
            <person name="Mayhew G.F."/>
            <person name="Plunkett G. III"/>
            <person name="Rose D.J."/>
            <person name="Darling A."/>
            <person name="Mau B."/>
            <person name="Perna N.T."/>
            <person name="Payne S.M."/>
            <person name="Runyen-Janecky L.J."/>
            <person name="Zhou S."/>
            <person name="Schwartz D.C."/>
            <person name="Blattner F.R."/>
        </authorList>
    </citation>
    <scope>NUCLEOTIDE SEQUENCE [LARGE SCALE GENOMIC DNA]</scope>
    <source>
        <strain>ATCC 700930 / 2457T / Serotype 2a</strain>
    </source>
</reference>
<name>KUP_SHIFL</name>
<comment type="function">
    <text evidence="1">Responsible for the low-affinity transport of potassium into the cell. Likely operates as a K(+):H(+) symporter.</text>
</comment>
<comment type="catalytic activity">
    <reaction evidence="1">
        <text>K(+)(in) + H(+)(in) = K(+)(out) + H(+)(out)</text>
        <dbReference type="Rhea" id="RHEA:28490"/>
        <dbReference type="ChEBI" id="CHEBI:15378"/>
        <dbReference type="ChEBI" id="CHEBI:29103"/>
    </reaction>
    <physiologicalReaction direction="right-to-left" evidence="1">
        <dbReference type="Rhea" id="RHEA:28492"/>
    </physiologicalReaction>
</comment>
<comment type="subcellular location">
    <subcellularLocation>
        <location evidence="1">Cell inner membrane</location>
        <topology evidence="1">Multi-pass membrane protein</topology>
    </subcellularLocation>
</comment>
<comment type="similarity">
    <text evidence="1 2">Belongs to the HAK/KUP transporter (TC 2.A.72) family.</text>
</comment>
<evidence type="ECO:0000255" key="1">
    <source>
        <dbReference type="HAMAP-Rule" id="MF_01522"/>
    </source>
</evidence>
<evidence type="ECO:0000305" key="2"/>
<gene>
    <name evidence="1" type="primary">kup</name>
    <name type="ordered locus">SF3828</name>
    <name type="ordered locus">S3940</name>
</gene>
<proteinExistence type="inferred from homology"/>
<protein>
    <recommendedName>
        <fullName evidence="1">Low affinity potassium transport system protein Kup</fullName>
    </recommendedName>
    <alternativeName>
        <fullName evidence="1">Kup system potassium uptake protein</fullName>
    </alternativeName>
</protein>
<accession>Q83PJ2</accession>
<accession>Q7BZA7</accession>
<keyword id="KW-0997">Cell inner membrane</keyword>
<keyword id="KW-1003">Cell membrane</keyword>
<keyword id="KW-0406">Ion transport</keyword>
<keyword id="KW-0472">Membrane</keyword>
<keyword id="KW-0630">Potassium</keyword>
<keyword id="KW-0633">Potassium transport</keyword>
<keyword id="KW-1185">Reference proteome</keyword>
<keyword id="KW-0769">Symport</keyword>
<keyword id="KW-0812">Transmembrane</keyword>
<keyword id="KW-1133">Transmembrane helix</keyword>
<keyword id="KW-0813">Transport</keyword>